<proteinExistence type="inferred from homology"/>
<protein>
    <recommendedName>
        <fullName evidence="1">Large ribosomal subunit protein bL21</fullName>
    </recommendedName>
    <alternativeName>
        <fullName evidence="2">50S ribosomal protein L21</fullName>
    </alternativeName>
</protein>
<gene>
    <name evidence="1" type="primary">rplU</name>
    <name type="ordered locus">XOO1620</name>
</gene>
<accession>Q5H2E7</accession>
<feature type="chain" id="PRO_0000269431" description="Large ribosomal subunit protein bL21">
    <location>
        <begin position="1"/>
        <end position="106"/>
    </location>
</feature>
<comment type="function">
    <text evidence="1">This protein binds to 23S rRNA in the presence of protein L20.</text>
</comment>
<comment type="subunit">
    <text evidence="1">Part of the 50S ribosomal subunit. Contacts protein L20.</text>
</comment>
<comment type="similarity">
    <text evidence="1">Belongs to the bacterial ribosomal protein bL21 family.</text>
</comment>
<name>RL21_XANOR</name>
<reference key="1">
    <citation type="journal article" date="2005" name="Nucleic Acids Res.">
        <title>The genome sequence of Xanthomonas oryzae pathovar oryzae KACC10331, the bacterial blight pathogen of rice.</title>
        <authorList>
            <person name="Lee B.-M."/>
            <person name="Park Y.-J."/>
            <person name="Park D.-S."/>
            <person name="Kang H.-W."/>
            <person name="Kim J.-G."/>
            <person name="Song E.-S."/>
            <person name="Park I.-C."/>
            <person name="Yoon U.-H."/>
            <person name="Hahn J.-H."/>
            <person name="Koo B.-S."/>
            <person name="Lee G.-B."/>
            <person name="Kim H."/>
            <person name="Park H.-S."/>
            <person name="Yoon K.-O."/>
            <person name="Kim J.-H."/>
            <person name="Jung C.-H."/>
            <person name="Koh N.-H."/>
            <person name="Seo J.-S."/>
            <person name="Go S.-J."/>
        </authorList>
    </citation>
    <scope>NUCLEOTIDE SEQUENCE [LARGE SCALE GENOMIC DNA]</scope>
    <source>
        <strain>KACC10331 / KXO85</strain>
    </source>
</reference>
<sequence>MYAVLVTGGKQYRVAQGETLRVEKLEVEAGNEIKFDTVLMLGDSDGIKLGDALKGASVTAKVVAHGRADKVRIIKFRRRKHHMKRQGHRQHYTEIEITGIAGGDKK</sequence>
<dbReference type="EMBL" id="AE013598">
    <property type="protein sequence ID" value="AAW74874.1"/>
    <property type="molecule type" value="Genomic_DNA"/>
</dbReference>
<dbReference type="SMR" id="Q5H2E7"/>
<dbReference type="STRING" id="291331.XOO1620"/>
<dbReference type="KEGG" id="xoo:XOO1620"/>
<dbReference type="HOGENOM" id="CLU_061463_3_3_6"/>
<dbReference type="Proteomes" id="UP000006735">
    <property type="component" value="Chromosome"/>
</dbReference>
<dbReference type="GO" id="GO:0005737">
    <property type="term" value="C:cytoplasm"/>
    <property type="evidence" value="ECO:0007669"/>
    <property type="project" value="UniProtKB-ARBA"/>
</dbReference>
<dbReference type="GO" id="GO:1990904">
    <property type="term" value="C:ribonucleoprotein complex"/>
    <property type="evidence" value="ECO:0007669"/>
    <property type="project" value="UniProtKB-KW"/>
</dbReference>
<dbReference type="GO" id="GO:0005840">
    <property type="term" value="C:ribosome"/>
    <property type="evidence" value="ECO:0007669"/>
    <property type="project" value="UniProtKB-KW"/>
</dbReference>
<dbReference type="GO" id="GO:0019843">
    <property type="term" value="F:rRNA binding"/>
    <property type="evidence" value="ECO:0007669"/>
    <property type="project" value="UniProtKB-UniRule"/>
</dbReference>
<dbReference type="GO" id="GO:0003735">
    <property type="term" value="F:structural constituent of ribosome"/>
    <property type="evidence" value="ECO:0007669"/>
    <property type="project" value="InterPro"/>
</dbReference>
<dbReference type="GO" id="GO:0006412">
    <property type="term" value="P:translation"/>
    <property type="evidence" value="ECO:0007669"/>
    <property type="project" value="UniProtKB-UniRule"/>
</dbReference>
<dbReference type="HAMAP" id="MF_01363">
    <property type="entry name" value="Ribosomal_bL21"/>
    <property type="match status" value="1"/>
</dbReference>
<dbReference type="InterPro" id="IPR028909">
    <property type="entry name" value="bL21-like"/>
</dbReference>
<dbReference type="InterPro" id="IPR036164">
    <property type="entry name" value="bL21-like_sf"/>
</dbReference>
<dbReference type="InterPro" id="IPR001787">
    <property type="entry name" value="Ribosomal_bL21"/>
</dbReference>
<dbReference type="InterPro" id="IPR018258">
    <property type="entry name" value="Ribosomal_bL21_CS"/>
</dbReference>
<dbReference type="NCBIfam" id="TIGR00061">
    <property type="entry name" value="L21"/>
    <property type="match status" value="1"/>
</dbReference>
<dbReference type="PANTHER" id="PTHR21349">
    <property type="entry name" value="50S RIBOSOMAL PROTEIN L21"/>
    <property type="match status" value="1"/>
</dbReference>
<dbReference type="PANTHER" id="PTHR21349:SF0">
    <property type="entry name" value="LARGE RIBOSOMAL SUBUNIT PROTEIN BL21M"/>
    <property type="match status" value="1"/>
</dbReference>
<dbReference type="Pfam" id="PF00829">
    <property type="entry name" value="Ribosomal_L21p"/>
    <property type="match status" value="1"/>
</dbReference>
<dbReference type="SUPFAM" id="SSF141091">
    <property type="entry name" value="L21p-like"/>
    <property type="match status" value="1"/>
</dbReference>
<dbReference type="PROSITE" id="PS01169">
    <property type="entry name" value="RIBOSOMAL_L21"/>
    <property type="match status" value="1"/>
</dbReference>
<organism>
    <name type="scientific">Xanthomonas oryzae pv. oryzae (strain KACC10331 / KXO85)</name>
    <dbReference type="NCBI Taxonomy" id="291331"/>
    <lineage>
        <taxon>Bacteria</taxon>
        <taxon>Pseudomonadati</taxon>
        <taxon>Pseudomonadota</taxon>
        <taxon>Gammaproteobacteria</taxon>
        <taxon>Lysobacterales</taxon>
        <taxon>Lysobacteraceae</taxon>
        <taxon>Xanthomonas</taxon>
    </lineage>
</organism>
<evidence type="ECO:0000255" key="1">
    <source>
        <dbReference type="HAMAP-Rule" id="MF_01363"/>
    </source>
</evidence>
<evidence type="ECO:0000305" key="2"/>
<keyword id="KW-1185">Reference proteome</keyword>
<keyword id="KW-0687">Ribonucleoprotein</keyword>
<keyword id="KW-0689">Ribosomal protein</keyword>
<keyword id="KW-0694">RNA-binding</keyword>
<keyword id="KW-0699">rRNA-binding</keyword>